<sequence length="160" mass="17300">MSTIPISKEGFAKIKAELASLKKERPEVIKAIAEAREEGDLKENGGYHAARERQGMLEAKINYIESRIPQFNVVDMTTLGGEKITFGATVTLEDIDTGAEKTYTIMGPDESDFKKGIISIESPVGKALLGKIEGDEVVVNAPKGKIEYGIVSVIFNGPIS</sequence>
<keyword id="KW-0175">Coiled coil</keyword>
<keyword id="KW-0238">DNA-binding</keyword>
<keyword id="KW-1185">Reference proteome</keyword>
<keyword id="KW-0804">Transcription</keyword>
<keyword id="KW-0805">Transcription regulation</keyword>
<protein>
    <recommendedName>
        <fullName evidence="1">Transcription elongation factor GreA</fullName>
    </recommendedName>
    <alternativeName>
        <fullName evidence="1">Transcript cleavage factor GreA</fullName>
    </alternativeName>
</protein>
<organism>
    <name type="scientific">Maridesulfovibrio salexigens (strain ATCC 14822 / DSM 2638 / NCIMB 8403 / VKM B-1763)</name>
    <name type="common">Desulfovibrio salexigens</name>
    <dbReference type="NCBI Taxonomy" id="526222"/>
    <lineage>
        <taxon>Bacteria</taxon>
        <taxon>Pseudomonadati</taxon>
        <taxon>Thermodesulfobacteriota</taxon>
        <taxon>Desulfovibrionia</taxon>
        <taxon>Desulfovibrionales</taxon>
        <taxon>Desulfovibrionaceae</taxon>
        <taxon>Maridesulfovibrio</taxon>
    </lineage>
</organism>
<evidence type="ECO:0000255" key="1">
    <source>
        <dbReference type="HAMAP-Rule" id="MF_00105"/>
    </source>
</evidence>
<feature type="chain" id="PRO_1000202849" description="Transcription elongation factor GreA">
    <location>
        <begin position="1"/>
        <end position="160"/>
    </location>
</feature>
<feature type="coiled-coil region" evidence="1">
    <location>
        <begin position="14"/>
        <end position="38"/>
    </location>
</feature>
<accession>C6BRV2</accession>
<proteinExistence type="inferred from homology"/>
<comment type="function">
    <text evidence="1">Necessary for efficient RNA polymerase transcription elongation past template-encoded arresting sites. The arresting sites in DNA have the property of trapping a certain fraction of elongating RNA polymerases that pass through, resulting in locked ternary complexes. Cleavage of the nascent transcript by cleavage factors such as GreA or GreB allows the resumption of elongation from the new 3'terminus. GreA releases sequences of 2 to 3 nucleotides.</text>
</comment>
<comment type="similarity">
    <text evidence="1">Belongs to the GreA/GreB family.</text>
</comment>
<reference key="1">
    <citation type="submission" date="2009-06" db="EMBL/GenBank/DDBJ databases">
        <title>Complete sequence of Desulfovibrio salexigens DSM 2638.</title>
        <authorList>
            <consortium name="US DOE Joint Genome Institute"/>
            <person name="Lucas S."/>
            <person name="Copeland A."/>
            <person name="Lapidus A."/>
            <person name="Glavina del Rio T."/>
            <person name="Tice H."/>
            <person name="Bruce D."/>
            <person name="Goodwin L."/>
            <person name="Pitluck S."/>
            <person name="Munk A.C."/>
            <person name="Brettin T."/>
            <person name="Detter J.C."/>
            <person name="Han C."/>
            <person name="Tapia R."/>
            <person name="Larimer F."/>
            <person name="Land M."/>
            <person name="Hauser L."/>
            <person name="Kyrpides N."/>
            <person name="Anderson I."/>
            <person name="Wall J.D."/>
            <person name="Arkin A.P."/>
            <person name="Dehal P."/>
            <person name="Chivian D."/>
            <person name="Giles B."/>
            <person name="Hazen T.C."/>
        </authorList>
    </citation>
    <scope>NUCLEOTIDE SEQUENCE [LARGE SCALE GENOMIC DNA]</scope>
    <source>
        <strain>ATCC 14822 / DSM 2638 / NCIMB 8403 / VKM B-1763</strain>
    </source>
</reference>
<dbReference type="EMBL" id="CP001649">
    <property type="protein sequence ID" value="ACS81335.1"/>
    <property type="molecule type" value="Genomic_DNA"/>
</dbReference>
<dbReference type="RefSeq" id="WP_015853151.1">
    <property type="nucleotide sequence ID" value="NC_012881.1"/>
</dbReference>
<dbReference type="SMR" id="C6BRV2"/>
<dbReference type="STRING" id="526222.Desal_3284"/>
<dbReference type="KEGG" id="dsa:Desal_3284"/>
<dbReference type="eggNOG" id="COG0782">
    <property type="taxonomic scope" value="Bacteria"/>
</dbReference>
<dbReference type="HOGENOM" id="CLU_101379_2_0_7"/>
<dbReference type="OrthoDB" id="9808774at2"/>
<dbReference type="Proteomes" id="UP000002601">
    <property type="component" value="Chromosome"/>
</dbReference>
<dbReference type="GO" id="GO:0003677">
    <property type="term" value="F:DNA binding"/>
    <property type="evidence" value="ECO:0007669"/>
    <property type="project" value="UniProtKB-UniRule"/>
</dbReference>
<dbReference type="GO" id="GO:0070063">
    <property type="term" value="F:RNA polymerase binding"/>
    <property type="evidence" value="ECO:0007669"/>
    <property type="project" value="InterPro"/>
</dbReference>
<dbReference type="GO" id="GO:0006354">
    <property type="term" value="P:DNA-templated transcription elongation"/>
    <property type="evidence" value="ECO:0007669"/>
    <property type="project" value="TreeGrafter"/>
</dbReference>
<dbReference type="GO" id="GO:0032784">
    <property type="term" value="P:regulation of DNA-templated transcription elongation"/>
    <property type="evidence" value="ECO:0007669"/>
    <property type="project" value="UniProtKB-UniRule"/>
</dbReference>
<dbReference type="FunFam" id="1.10.287.180:FF:000001">
    <property type="entry name" value="Transcription elongation factor GreA"/>
    <property type="match status" value="1"/>
</dbReference>
<dbReference type="FunFam" id="3.10.50.30:FF:000001">
    <property type="entry name" value="Transcription elongation factor GreA"/>
    <property type="match status" value="1"/>
</dbReference>
<dbReference type="Gene3D" id="3.10.50.30">
    <property type="entry name" value="Transcription elongation factor, GreA/GreB, C-terminal domain"/>
    <property type="match status" value="1"/>
</dbReference>
<dbReference type="Gene3D" id="1.10.287.180">
    <property type="entry name" value="Transcription elongation factor, GreA/GreB, N-terminal domain"/>
    <property type="match status" value="1"/>
</dbReference>
<dbReference type="HAMAP" id="MF_00105">
    <property type="entry name" value="GreA_GreB"/>
    <property type="match status" value="1"/>
</dbReference>
<dbReference type="InterPro" id="IPR036953">
    <property type="entry name" value="GreA/GreB_C_sf"/>
</dbReference>
<dbReference type="InterPro" id="IPR018151">
    <property type="entry name" value="TF_GreA/GreB_CS"/>
</dbReference>
<dbReference type="InterPro" id="IPR006359">
    <property type="entry name" value="Tscrpt_elong_fac_GreA"/>
</dbReference>
<dbReference type="InterPro" id="IPR028624">
    <property type="entry name" value="Tscrpt_elong_fac_GreA/B"/>
</dbReference>
<dbReference type="InterPro" id="IPR001437">
    <property type="entry name" value="Tscrpt_elong_fac_GreA/B_C"/>
</dbReference>
<dbReference type="InterPro" id="IPR023459">
    <property type="entry name" value="Tscrpt_elong_fac_GreA/B_fam"/>
</dbReference>
<dbReference type="InterPro" id="IPR022691">
    <property type="entry name" value="Tscrpt_elong_fac_GreA/B_N"/>
</dbReference>
<dbReference type="InterPro" id="IPR036805">
    <property type="entry name" value="Tscrpt_elong_fac_GreA/B_N_sf"/>
</dbReference>
<dbReference type="NCBIfam" id="TIGR01462">
    <property type="entry name" value="greA"/>
    <property type="match status" value="1"/>
</dbReference>
<dbReference type="NCBIfam" id="NF001261">
    <property type="entry name" value="PRK00226.1-2"/>
    <property type="match status" value="1"/>
</dbReference>
<dbReference type="NCBIfam" id="NF001263">
    <property type="entry name" value="PRK00226.1-4"/>
    <property type="match status" value="1"/>
</dbReference>
<dbReference type="NCBIfam" id="NF001264">
    <property type="entry name" value="PRK00226.1-5"/>
    <property type="match status" value="1"/>
</dbReference>
<dbReference type="PANTHER" id="PTHR30437">
    <property type="entry name" value="TRANSCRIPTION ELONGATION FACTOR GREA"/>
    <property type="match status" value="1"/>
</dbReference>
<dbReference type="PANTHER" id="PTHR30437:SF4">
    <property type="entry name" value="TRANSCRIPTION ELONGATION FACTOR GREA"/>
    <property type="match status" value="1"/>
</dbReference>
<dbReference type="Pfam" id="PF01272">
    <property type="entry name" value="GreA_GreB"/>
    <property type="match status" value="1"/>
</dbReference>
<dbReference type="Pfam" id="PF03449">
    <property type="entry name" value="GreA_GreB_N"/>
    <property type="match status" value="1"/>
</dbReference>
<dbReference type="PIRSF" id="PIRSF006092">
    <property type="entry name" value="GreA_GreB"/>
    <property type="match status" value="1"/>
</dbReference>
<dbReference type="SUPFAM" id="SSF54534">
    <property type="entry name" value="FKBP-like"/>
    <property type="match status" value="1"/>
</dbReference>
<dbReference type="SUPFAM" id="SSF46557">
    <property type="entry name" value="GreA transcript cleavage protein, N-terminal domain"/>
    <property type="match status" value="1"/>
</dbReference>
<dbReference type="PROSITE" id="PS00829">
    <property type="entry name" value="GREAB_1"/>
    <property type="match status" value="1"/>
</dbReference>
<dbReference type="PROSITE" id="PS00830">
    <property type="entry name" value="GREAB_2"/>
    <property type="match status" value="1"/>
</dbReference>
<gene>
    <name evidence="1" type="primary">greA</name>
    <name type="ordered locus">Desal_3284</name>
</gene>
<name>GREA_MARSD</name>